<proteinExistence type="evidence at transcript level"/>
<organism>
    <name type="scientific">Pan troglodytes</name>
    <name type="common">Chimpanzee</name>
    <dbReference type="NCBI Taxonomy" id="9598"/>
    <lineage>
        <taxon>Eukaryota</taxon>
        <taxon>Metazoa</taxon>
        <taxon>Chordata</taxon>
        <taxon>Craniata</taxon>
        <taxon>Vertebrata</taxon>
        <taxon>Euteleostomi</taxon>
        <taxon>Mammalia</taxon>
        <taxon>Eutheria</taxon>
        <taxon>Euarchontoglires</taxon>
        <taxon>Primates</taxon>
        <taxon>Haplorrhini</taxon>
        <taxon>Catarrhini</taxon>
        <taxon>Hominidae</taxon>
        <taxon>Pan</taxon>
    </lineage>
</organism>
<accession>Q861U9</accession>
<dbReference type="EMBL" id="AH012491">
    <property type="protein sequence ID" value="AAO37287.1"/>
    <property type="molecule type" value="Genomic_DNA"/>
</dbReference>
<dbReference type="EMBL" id="AY633110">
    <property type="protein sequence ID" value="AAT46347.1"/>
    <property type="molecule type" value="mRNA"/>
</dbReference>
<dbReference type="RefSeq" id="NP_001008987.1">
    <property type="nucleotide sequence ID" value="NM_001008987.1"/>
</dbReference>
<dbReference type="SMR" id="Q861U9"/>
<dbReference type="FunCoup" id="Q861U9">
    <property type="interactions" value="830"/>
</dbReference>
<dbReference type="STRING" id="9598.ENSPTRP00000038748"/>
<dbReference type="PaxDb" id="9598-ENSPTRP00000038748"/>
<dbReference type="Ensembl" id="ENSPTRT00000041959.3">
    <property type="protein sequence ID" value="ENSPTRP00000038748.2"/>
    <property type="gene ID" value="ENSPTRG00000022470.6"/>
</dbReference>
<dbReference type="GeneID" id="449509"/>
<dbReference type="KEGG" id="ptr:449509"/>
<dbReference type="CTD" id="6192"/>
<dbReference type="VGNC" id="VGNC:5895">
    <property type="gene designation" value="RPS4Y1"/>
</dbReference>
<dbReference type="eggNOG" id="KOG0378">
    <property type="taxonomic scope" value="Eukaryota"/>
</dbReference>
<dbReference type="GeneTree" id="ENSGT00390000005569"/>
<dbReference type="HOGENOM" id="CLU_060400_1_0_1"/>
<dbReference type="InParanoid" id="Q861U9"/>
<dbReference type="OMA" id="WMLDELT"/>
<dbReference type="TreeFam" id="TF300612"/>
<dbReference type="Proteomes" id="UP000002277">
    <property type="component" value="Chromosome Y"/>
</dbReference>
<dbReference type="Bgee" id="ENSPTRG00000022470">
    <property type="expression patterns" value="Expressed in testis and 11 other cell types or tissues"/>
</dbReference>
<dbReference type="GO" id="GO:0022627">
    <property type="term" value="C:cytosolic small ribosomal subunit"/>
    <property type="evidence" value="ECO:0000318"/>
    <property type="project" value="GO_Central"/>
</dbReference>
<dbReference type="GO" id="GO:0003723">
    <property type="term" value="F:RNA binding"/>
    <property type="evidence" value="ECO:0000318"/>
    <property type="project" value="GO_Central"/>
</dbReference>
<dbReference type="GO" id="GO:0019843">
    <property type="term" value="F:rRNA binding"/>
    <property type="evidence" value="ECO:0007669"/>
    <property type="project" value="UniProtKB-KW"/>
</dbReference>
<dbReference type="GO" id="GO:0003735">
    <property type="term" value="F:structural constituent of ribosome"/>
    <property type="evidence" value="ECO:0000318"/>
    <property type="project" value="GO_Central"/>
</dbReference>
<dbReference type="GO" id="GO:0006412">
    <property type="term" value="P:translation"/>
    <property type="evidence" value="ECO:0000318"/>
    <property type="project" value="GO_Central"/>
</dbReference>
<dbReference type="CDD" id="cd06087">
    <property type="entry name" value="KOW_RPS4"/>
    <property type="match status" value="1"/>
</dbReference>
<dbReference type="CDD" id="cd00165">
    <property type="entry name" value="S4"/>
    <property type="match status" value="1"/>
</dbReference>
<dbReference type="FunFam" id="2.30.30.30:FF:000005">
    <property type="entry name" value="40S ribosomal protein S4"/>
    <property type="match status" value="1"/>
</dbReference>
<dbReference type="FunFam" id="2.40.50.740:FF:000001">
    <property type="entry name" value="40S ribosomal protein S4"/>
    <property type="match status" value="1"/>
</dbReference>
<dbReference type="FunFam" id="3.10.290.10:FF:000051">
    <property type="entry name" value="40S ribosomal protein S4, X isoform"/>
    <property type="match status" value="1"/>
</dbReference>
<dbReference type="Gene3D" id="2.30.30.30">
    <property type="match status" value="1"/>
</dbReference>
<dbReference type="Gene3D" id="2.40.50.740">
    <property type="match status" value="1"/>
</dbReference>
<dbReference type="Gene3D" id="3.10.290.10">
    <property type="entry name" value="RNA-binding S4 domain"/>
    <property type="match status" value="1"/>
</dbReference>
<dbReference type="HAMAP" id="MF_00485">
    <property type="entry name" value="Ribosomal_eS4"/>
    <property type="match status" value="1"/>
</dbReference>
<dbReference type="InterPro" id="IPR005824">
    <property type="entry name" value="KOW"/>
</dbReference>
<dbReference type="InterPro" id="IPR014722">
    <property type="entry name" value="Rib_uL2_dom2"/>
</dbReference>
<dbReference type="InterPro" id="IPR000876">
    <property type="entry name" value="Ribosomal_eS4"/>
</dbReference>
<dbReference type="InterPro" id="IPR032277">
    <property type="entry name" value="Ribosomal_eS4_C"/>
</dbReference>
<dbReference type="InterPro" id="IPR013845">
    <property type="entry name" value="Ribosomal_eS4_central_region"/>
</dbReference>
<dbReference type="InterPro" id="IPR038237">
    <property type="entry name" value="Ribosomal_eS4_central_sf"/>
</dbReference>
<dbReference type="InterPro" id="IPR041982">
    <property type="entry name" value="Ribosomal_eS4_KOW"/>
</dbReference>
<dbReference type="InterPro" id="IPR013843">
    <property type="entry name" value="Ribosomal_eS4_N"/>
</dbReference>
<dbReference type="InterPro" id="IPR018199">
    <property type="entry name" value="Ribosomal_eS4_N_CS"/>
</dbReference>
<dbReference type="InterPro" id="IPR002942">
    <property type="entry name" value="S4_RNA-bd"/>
</dbReference>
<dbReference type="InterPro" id="IPR036986">
    <property type="entry name" value="S4_RNA-bd_sf"/>
</dbReference>
<dbReference type="PANTHER" id="PTHR11581">
    <property type="entry name" value="30S/40S RIBOSOMAL PROTEIN S4"/>
    <property type="match status" value="1"/>
</dbReference>
<dbReference type="PANTHER" id="PTHR11581:SF8">
    <property type="entry name" value="SMALL RIBOSOMAL SUBUNIT PROTEIN ES4, Y ISOFORM 1"/>
    <property type="match status" value="1"/>
</dbReference>
<dbReference type="Pfam" id="PF16121">
    <property type="entry name" value="40S_S4_C"/>
    <property type="match status" value="1"/>
</dbReference>
<dbReference type="Pfam" id="PF00467">
    <property type="entry name" value="KOW"/>
    <property type="match status" value="1"/>
</dbReference>
<dbReference type="Pfam" id="PF00900">
    <property type="entry name" value="Ribosomal_S4e"/>
    <property type="match status" value="1"/>
</dbReference>
<dbReference type="Pfam" id="PF08071">
    <property type="entry name" value="RS4NT"/>
    <property type="match status" value="1"/>
</dbReference>
<dbReference type="PIRSF" id="PIRSF002116">
    <property type="entry name" value="Ribosomal_S4"/>
    <property type="match status" value="1"/>
</dbReference>
<dbReference type="SMART" id="SM00363">
    <property type="entry name" value="S4"/>
    <property type="match status" value="1"/>
</dbReference>
<dbReference type="PROSITE" id="PS00528">
    <property type="entry name" value="RIBOSOMAL_S4E"/>
    <property type="match status" value="1"/>
</dbReference>
<dbReference type="PROSITE" id="PS50889">
    <property type="entry name" value="S4"/>
    <property type="match status" value="1"/>
</dbReference>
<gene>
    <name type="primary">RPS4Y1</name>
    <name type="synonym">RPS4Y</name>
</gene>
<reference key="1">
    <citation type="journal article" date="1998" name="Mol. Biol. Evol.">
        <title>Evolution of RPS4Y.</title>
        <authorList>
            <person name="Bergen A.W."/>
            <person name="Pratt M."/>
            <person name="Mehlman P."/>
            <person name="Goldman D."/>
        </authorList>
    </citation>
    <scope>NUCLEOTIDE SEQUENCE [GENOMIC DNA]</scope>
</reference>
<reference key="2">
    <citation type="submission" date="2004-07" db="EMBL/GenBank/DDBJ databases">
        <title>The DNA sequence of the chimpanzee Y chromosome.</title>
        <authorList>
            <person name="Hughes J.F."/>
            <person name="Pyntikova T."/>
            <person name="Skaletsky H."/>
            <person name="Minx P.J."/>
            <person name="Rozen S."/>
            <person name="Wilson R.K."/>
            <person name="Page D.C."/>
        </authorList>
    </citation>
    <scope>NUCLEOTIDE SEQUENCE [LARGE SCALE GENOMIC DNA]</scope>
</reference>
<comment type="similarity">
    <text evidence="1">Belongs to the eukaryotic ribosomal protein eS4 family.</text>
</comment>
<name>RS4Y1_PANTR</name>
<evidence type="ECO:0000305" key="1"/>
<sequence>MARGPKKHLKRVAAPKHWMLDKLTGVFAPRPSTGPHKLRECLPLIVFLRNRLKYALTGDEVKKICMQRFIKIDGKVRVDVTYPAGFMDVISIEKTGEHFRLVYDTKGRFAVHRITVEEAKYKLCKVRKITVGVKGIPHLVTHDARTIRYPDPVIKVNDTVQIDLGTGKIINFIKFDTGNLCMVIGGANLGRVGVITNRERHPGSFDVVHVKDANGNSFATRLSNIFVIGNGNKPWISLPRGKGIRLTVAAERDKRLATKQSSG</sequence>
<feature type="chain" id="PRO_0000130816" description="Small ribosomal subunit protein eS4, Y isoform 1">
    <location>
        <begin position="1"/>
        <end position="263"/>
    </location>
</feature>
<feature type="domain" description="S4 RNA-binding">
    <location>
        <begin position="42"/>
        <end position="104"/>
    </location>
</feature>
<protein>
    <recommendedName>
        <fullName evidence="1">Small ribosomal subunit protein eS4, Y isoform 1</fullName>
    </recommendedName>
    <alternativeName>
        <fullName>40S ribosomal protein S4, Y isoform 1</fullName>
    </alternativeName>
</protein>
<keyword id="KW-1185">Reference proteome</keyword>
<keyword id="KW-0687">Ribonucleoprotein</keyword>
<keyword id="KW-0689">Ribosomal protein</keyword>
<keyword id="KW-0694">RNA-binding</keyword>
<keyword id="KW-0699">rRNA-binding</keyword>